<keyword id="KW-0169">Cobalamin biosynthesis</keyword>
<keyword id="KW-0489">Methyltransferase</keyword>
<keyword id="KW-1185">Reference proteome</keyword>
<keyword id="KW-0949">S-adenosyl-L-methionine</keyword>
<keyword id="KW-0808">Transferase</keyword>
<protein>
    <recommendedName>
        <fullName evidence="1">Cobalt-precorrin-5B C(1)-methyltransferase</fullName>
        <ecNumber evidence="1">2.1.1.195</ecNumber>
    </recommendedName>
    <alternativeName>
        <fullName evidence="1">Cobalt-precorrin-6A synthase</fullName>
    </alternativeName>
</protein>
<organism>
    <name type="scientific">Listeria monocytogenes serovar 1/2a (strain ATCC BAA-679 / EGD-e)</name>
    <dbReference type="NCBI Taxonomy" id="169963"/>
    <lineage>
        <taxon>Bacteria</taxon>
        <taxon>Bacillati</taxon>
        <taxon>Bacillota</taxon>
        <taxon>Bacilli</taxon>
        <taxon>Bacillales</taxon>
        <taxon>Listeriaceae</taxon>
        <taxon>Listeria</taxon>
    </lineage>
</organism>
<accession>Q8Y7S7</accession>
<name>CBID_LISMO</name>
<evidence type="ECO:0000255" key="1">
    <source>
        <dbReference type="HAMAP-Rule" id="MF_00787"/>
    </source>
</evidence>
<reference key="1">
    <citation type="journal article" date="2001" name="Science">
        <title>Comparative genomics of Listeria species.</title>
        <authorList>
            <person name="Glaser P."/>
            <person name="Frangeul L."/>
            <person name="Buchrieser C."/>
            <person name="Rusniok C."/>
            <person name="Amend A."/>
            <person name="Baquero F."/>
            <person name="Berche P."/>
            <person name="Bloecker H."/>
            <person name="Brandt P."/>
            <person name="Chakraborty T."/>
            <person name="Charbit A."/>
            <person name="Chetouani F."/>
            <person name="Couve E."/>
            <person name="de Daruvar A."/>
            <person name="Dehoux P."/>
            <person name="Domann E."/>
            <person name="Dominguez-Bernal G."/>
            <person name="Duchaud E."/>
            <person name="Durant L."/>
            <person name="Dussurget O."/>
            <person name="Entian K.-D."/>
            <person name="Fsihi H."/>
            <person name="Garcia-del Portillo F."/>
            <person name="Garrido P."/>
            <person name="Gautier L."/>
            <person name="Goebel W."/>
            <person name="Gomez-Lopez N."/>
            <person name="Hain T."/>
            <person name="Hauf J."/>
            <person name="Jackson D."/>
            <person name="Jones L.-M."/>
            <person name="Kaerst U."/>
            <person name="Kreft J."/>
            <person name="Kuhn M."/>
            <person name="Kunst F."/>
            <person name="Kurapkat G."/>
            <person name="Madueno E."/>
            <person name="Maitournam A."/>
            <person name="Mata Vicente J."/>
            <person name="Ng E."/>
            <person name="Nedjari H."/>
            <person name="Nordsiek G."/>
            <person name="Novella S."/>
            <person name="de Pablos B."/>
            <person name="Perez-Diaz J.-C."/>
            <person name="Purcell R."/>
            <person name="Remmel B."/>
            <person name="Rose M."/>
            <person name="Schlueter T."/>
            <person name="Simoes N."/>
            <person name="Tierrez A."/>
            <person name="Vazquez-Boland J.-A."/>
            <person name="Voss H."/>
            <person name="Wehland J."/>
            <person name="Cossart P."/>
        </authorList>
    </citation>
    <scope>NUCLEOTIDE SEQUENCE [LARGE SCALE GENOMIC DNA]</scope>
    <source>
        <strain>ATCC BAA-679 / EGD-e</strain>
    </source>
</reference>
<feature type="chain" id="PRO_0000141672" description="Cobalt-precorrin-5B C(1)-methyltransferase">
    <location>
        <begin position="1"/>
        <end position="373"/>
    </location>
</feature>
<comment type="function">
    <text evidence="1">Catalyzes the methylation of C-1 in cobalt-precorrin-5B to form cobalt-precorrin-6A.</text>
</comment>
<comment type="catalytic activity">
    <reaction evidence="1">
        <text>Co-precorrin-5B + S-adenosyl-L-methionine = Co-precorrin-6A + S-adenosyl-L-homocysteine</text>
        <dbReference type="Rhea" id="RHEA:26285"/>
        <dbReference type="ChEBI" id="CHEBI:57856"/>
        <dbReference type="ChEBI" id="CHEBI:59789"/>
        <dbReference type="ChEBI" id="CHEBI:60063"/>
        <dbReference type="ChEBI" id="CHEBI:60064"/>
        <dbReference type="EC" id="2.1.1.195"/>
    </reaction>
</comment>
<comment type="pathway">
    <text evidence="1">Cofactor biosynthesis; adenosylcobalamin biosynthesis; cob(II)yrinate a,c-diamide from sirohydrochlorin (anaerobic route): step 6/10.</text>
</comment>
<comment type="similarity">
    <text evidence="1">Belongs to the CbiD family.</text>
</comment>
<proteinExistence type="inferred from homology"/>
<sequence length="373" mass="40298">MEDFIYYNGKKYRKGYTTGTCAAAAAKACVEMILTQEEVSAVQVTTTGGTILEIPVAYQKFSKDKATAAVQKDGGDDIDATHGMWIFVDIDLTDNAEVVLDGGVGIGRATQKGISVAVGEAAINPAPRKNILATVRESLGENRGAKILVYAPEGEERAKRTMNSNLGIIGGISILGTTGIVTPMSDEGWKKSLSMELEMKRNQGLDQIILVPGNYGDDFVQNTLGFSSGNIVSMSNFVGYMLKETQRLAFKKVLMVGHFGKLVKVSAGIFTTYSKDADARAEILVANLALLGAPLSLLQAVEKCNTTEAAGELIEEAGFTQVYEVIAQKIKARSERFLKFTKPSVEIDVVTFSTERGLLAATKDIDVLREEWR</sequence>
<dbReference type="EC" id="2.1.1.195" evidence="1"/>
<dbReference type="EMBL" id="AL591978">
    <property type="protein sequence ID" value="CAC99272.1"/>
    <property type="molecule type" value="Genomic_DNA"/>
</dbReference>
<dbReference type="PIR" id="AB1224">
    <property type="entry name" value="AB1224"/>
</dbReference>
<dbReference type="RefSeq" id="NP_464719.1">
    <property type="nucleotide sequence ID" value="NC_003210.1"/>
</dbReference>
<dbReference type="RefSeq" id="WP_003721592.1">
    <property type="nucleotide sequence ID" value="NZ_CP149495.1"/>
</dbReference>
<dbReference type="SMR" id="Q8Y7S7"/>
<dbReference type="STRING" id="169963.gene:17593850"/>
<dbReference type="PaxDb" id="169963-lmo1194"/>
<dbReference type="EnsemblBacteria" id="CAC99272">
    <property type="protein sequence ID" value="CAC99272"/>
    <property type="gene ID" value="CAC99272"/>
</dbReference>
<dbReference type="GeneID" id="986097"/>
<dbReference type="KEGG" id="lmo:lmo1194"/>
<dbReference type="PATRIC" id="fig|169963.11.peg.1225"/>
<dbReference type="eggNOG" id="COG1903">
    <property type="taxonomic scope" value="Bacteria"/>
</dbReference>
<dbReference type="HOGENOM" id="CLU_041273_1_0_9"/>
<dbReference type="OrthoDB" id="6439987at2"/>
<dbReference type="PhylomeDB" id="Q8Y7S7"/>
<dbReference type="BioCyc" id="LMON169963:LMO1194-MONOMER"/>
<dbReference type="UniPathway" id="UPA00148">
    <property type="reaction ID" value="UER00227"/>
</dbReference>
<dbReference type="Proteomes" id="UP000000817">
    <property type="component" value="Chromosome"/>
</dbReference>
<dbReference type="GO" id="GO:0043780">
    <property type="term" value="F:cobalt-precorrin-5B C1-methyltransferase activity"/>
    <property type="evidence" value="ECO:0007669"/>
    <property type="project" value="RHEA"/>
</dbReference>
<dbReference type="GO" id="GO:0019251">
    <property type="term" value="P:anaerobic cobalamin biosynthetic process"/>
    <property type="evidence" value="ECO:0007669"/>
    <property type="project" value="UniProtKB-UniRule"/>
</dbReference>
<dbReference type="GO" id="GO:0032259">
    <property type="term" value="P:methylation"/>
    <property type="evidence" value="ECO:0007669"/>
    <property type="project" value="UniProtKB-KW"/>
</dbReference>
<dbReference type="Gene3D" id="3.30.2110.10">
    <property type="entry name" value="CbiD-like"/>
    <property type="match status" value="1"/>
</dbReference>
<dbReference type="HAMAP" id="MF_00787">
    <property type="entry name" value="CbiD"/>
    <property type="match status" value="1"/>
</dbReference>
<dbReference type="InterPro" id="IPR002748">
    <property type="entry name" value="CbiD"/>
</dbReference>
<dbReference type="InterPro" id="IPR036074">
    <property type="entry name" value="CbiD_sf"/>
</dbReference>
<dbReference type="NCBIfam" id="TIGR00312">
    <property type="entry name" value="cbiD"/>
    <property type="match status" value="1"/>
</dbReference>
<dbReference type="PANTHER" id="PTHR35863">
    <property type="entry name" value="COBALT-PRECORRIN-5B C(1)-METHYLTRANSFERASE"/>
    <property type="match status" value="1"/>
</dbReference>
<dbReference type="PANTHER" id="PTHR35863:SF1">
    <property type="entry name" value="COBALT-PRECORRIN-5B C(1)-METHYLTRANSFERASE"/>
    <property type="match status" value="1"/>
</dbReference>
<dbReference type="Pfam" id="PF01888">
    <property type="entry name" value="CbiD"/>
    <property type="match status" value="1"/>
</dbReference>
<dbReference type="PIRSF" id="PIRSF026782">
    <property type="entry name" value="CbiD"/>
    <property type="match status" value="1"/>
</dbReference>
<dbReference type="SUPFAM" id="SSF111342">
    <property type="entry name" value="CbiD-like"/>
    <property type="match status" value="1"/>
</dbReference>
<gene>
    <name evidence="1" type="primary">cbiD</name>
    <name type="ordered locus">lmo1194</name>
</gene>